<reference key="1">
    <citation type="submission" date="1996-06" db="EMBL/GenBank/DDBJ databases">
        <title>cDNA sequencing of the porcine UDP glucose pyrophosphorylase gene.</title>
        <authorList>
            <person name="Looft C."/>
            <person name="Paul S."/>
        </authorList>
    </citation>
    <scope>NUCLEOTIDE SEQUENCE [MRNA]</scope>
    <source>
        <tissue>Muscle</tissue>
    </source>
</reference>
<name>UGPA_PIG</name>
<feature type="chain" id="PRO_0000185754" description="UTP--glucose-1-phosphate uridylyltransferase">
    <location>
        <begin position="1"/>
        <end position="508"/>
    </location>
</feature>
<feature type="region of interest" description="Oligomerization" evidence="1">
    <location>
        <begin position="457"/>
        <end position="508"/>
    </location>
</feature>
<feature type="region of interest" description="Critical for end-to-end subunit interaction" evidence="1">
    <location>
        <begin position="502"/>
        <end position="503"/>
    </location>
</feature>
<feature type="active site" evidence="1">
    <location>
        <position position="396"/>
    </location>
</feature>
<feature type="binding site" evidence="3">
    <location>
        <begin position="113"/>
        <end position="116"/>
    </location>
    <ligand>
        <name>UTP</name>
        <dbReference type="ChEBI" id="CHEBI:46398"/>
    </ligand>
</feature>
<feature type="binding site" evidence="2">
    <location>
        <begin position="115"/>
        <end position="116"/>
    </location>
    <ligand>
        <name>substrate</name>
    </ligand>
</feature>
<feature type="binding site" evidence="1">
    <location>
        <position position="127"/>
    </location>
    <ligand>
        <name>Mg(2+)</name>
        <dbReference type="ChEBI" id="CHEBI:18420"/>
    </ligand>
</feature>
<feature type="binding site" evidence="3">
    <location>
        <position position="127"/>
    </location>
    <ligand>
        <name>UTP</name>
        <dbReference type="ChEBI" id="CHEBI:46398"/>
    </ligand>
</feature>
<feature type="binding site" evidence="3">
    <location>
        <position position="190"/>
    </location>
    <ligand>
        <name>UTP</name>
        <dbReference type="ChEBI" id="CHEBI:46398"/>
    </ligand>
</feature>
<feature type="binding site" evidence="3">
    <location>
        <position position="222"/>
    </location>
    <ligand>
        <name>UTP</name>
        <dbReference type="ChEBI" id="CHEBI:46398"/>
    </ligand>
</feature>
<feature type="binding site" evidence="2">
    <location>
        <position position="223"/>
    </location>
    <ligand>
        <name>substrate</name>
    </ligand>
</feature>
<feature type="binding site" evidence="2">
    <location>
        <begin position="251"/>
        <end position="253"/>
    </location>
    <ligand>
        <name>substrate</name>
    </ligand>
</feature>
<feature type="binding site" evidence="1">
    <location>
        <position position="253"/>
    </location>
    <ligand>
        <name>Mg(2+)</name>
        <dbReference type="ChEBI" id="CHEBI:18420"/>
    </ligand>
</feature>
<feature type="binding site" evidence="3">
    <location>
        <position position="253"/>
    </location>
    <ligand>
        <name>UTP</name>
        <dbReference type="ChEBI" id="CHEBI:46398"/>
    </ligand>
</feature>
<feature type="binding site" evidence="3">
    <location>
        <position position="396"/>
    </location>
    <ligand>
        <name>UTP</name>
        <dbReference type="ChEBI" id="CHEBI:46398"/>
    </ligand>
</feature>
<feature type="modified residue" description="Phosphoserine" evidence="2">
    <location>
        <position position="13"/>
    </location>
</feature>
<feature type="modified residue" description="Phosphothreonine" evidence="2">
    <location>
        <position position="426"/>
    </location>
</feature>
<feature type="modified residue" description="Phosphoserine" evidence="2">
    <location>
        <position position="434"/>
    </location>
</feature>
<feature type="modified residue" description="N6-acetyllysine" evidence="2">
    <location>
        <position position="438"/>
    </location>
</feature>
<feature type="modified residue" description="Phosphoserine" evidence="2">
    <location>
        <position position="448"/>
    </location>
</feature>
<feature type="modified residue" description="Phosphoserine" evidence="2">
    <location>
        <position position="461"/>
    </location>
</feature>
<accession>P79303</accession>
<gene>
    <name type="primary">UGP2</name>
</gene>
<dbReference type="EC" id="2.7.7.9" evidence="2"/>
<dbReference type="EMBL" id="X99312">
    <property type="protein sequence ID" value="CAA67690.1"/>
    <property type="molecule type" value="mRNA"/>
</dbReference>
<dbReference type="RefSeq" id="NP_999145.1">
    <property type="nucleotide sequence ID" value="NM_213980.1"/>
</dbReference>
<dbReference type="FunCoup" id="P79303">
    <property type="interactions" value="1439"/>
</dbReference>
<dbReference type="STRING" id="9823.ENSSSCP00000031136"/>
<dbReference type="PaxDb" id="9823-ENSSSCP00000008931"/>
<dbReference type="PeptideAtlas" id="P79303"/>
<dbReference type="GeneID" id="397040"/>
<dbReference type="KEGG" id="ssc:397040"/>
<dbReference type="CTD" id="7360"/>
<dbReference type="eggNOG" id="KOG2638">
    <property type="taxonomic scope" value="Eukaryota"/>
</dbReference>
<dbReference type="InParanoid" id="P79303"/>
<dbReference type="OrthoDB" id="932129at2759"/>
<dbReference type="UniPathway" id="UPA00164"/>
<dbReference type="Proteomes" id="UP000008227">
    <property type="component" value="Unplaced"/>
</dbReference>
<dbReference type="Proteomes" id="UP000314985">
    <property type="component" value="Unplaced"/>
</dbReference>
<dbReference type="Proteomes" id="UP000694570">
    <property type="component" value="Unplaced"/>
</dbReference>
<dbReference type="Proteomes" id="UP000694571">
    <property type="component" value="Unplaced"/>
</dbReference>
<dbReference type="Proteomes" id="UP000694720">
    <property type="component" value="Unplaced"/>
</dbReference>
<dbReference type="Proteomes" id="UP000694722">
    <property type="component" value="Unplaced"/>
</dbReference>
<dbReference type="Proteomes" id="UP000694723">
    <property type="component" value="Unplaced"/>
</dbReference>
<dbReference type="Proteomes" id="UP000694724">
    <property type="component" value="Unplaced"/>
</dbReference>
<dbReference type="Proteomes" id="UP000694725">
    <property type="component" value="Unplaced"/>
</dbReference>
<dbReference type="Proteomes" id="UP000694726">
    <property type="component" value="Unplaced"/>
</dbReference>
<dbReference type="Proteomes" id="UP000694727">
    <property type="component" value="Unplaced"/>
</dbReference>
<dbReference type="Proteomes" id="UP000694728">
    <property type="component" value="Unplaced"/>
</dbReference>
<dbReference type="GO" id="GO:0005737">
    <property type="term" value="C:cytoplasm"/>
    <property type="evidence" value="ECO:0000318"/>
    <property type="project" value="GO_Central"/>
</dbReference>
<dbReference type="GO" id="GO:0046872">
    <property type="term" value="F:metal ion binding"/>
    <property type="evidence" value="ECO:0007669"/>
    <property type="project" value="UniProtKB-KW"/>
</dbReference>
<dbReference type="GO" id="GO:0003983">
    <property type="term" value="F:UTP:glucose-1-phosphate uridylyltransferase activity"/>
    <property type="evidence" value="ECO:0000318"/>
    <property type="project" value="GO_Central"/>
</dbReference>
<dbReference type="GO" id="GO:0005978">
    <property type="term" value="P:glycogen biosynthetic process"/>
    <property type="evidence" value="ECO:0007669"/>
    <property type="project" value="UniProtKB-UniPathway"/>
</dbReference>
<dbReference type="GO" id="GO:0005977">
    <property type="term" value="P:glycogen metabolic process"/>
    <property type="evidence" value="ECO:0000318"/>
    <property type="project" value="GO_Central"/>
</dbReference>
<dbReference type="GO" id="GO:0006011">
    <property type="term" value="P:UDP-alpha-D-glucose metabolic process"/>
    <property type="evidence" value="ECO:0000318"/>
    <property type="project" value="GO_Central"/>
</dbReference>
<dbReference type="CDD" id="cd00897">
    <property type="entry name" value="UGPase_euk"/>
    <property type="match status" value="1"/>
</dbReference>
<dbReference type="FunFam" id="2.160.10.10:FF:000001">
    <property type="entry name" value="UTP--glucose-1-phosphate uridylyltransferase"/>
    <property type="match status" value="1"/>
</dbReference>
<dbReference type="FunFam" id="3.90.550.10:FF:000002">
    <property type="entry name" value="UTP--glucose-1-phosphate uridylyltransferase"/>
    <property type="match status" value="1"/>
</dbReference>
<dbReference type="Gene3D" id="2.160.10.10">
    <property type="entry name" value="Hexapeptide repeat proteins"/>
    <property type="match status" value="1"/>
</dbReference>
<dbReference type="Gene3D" id="3.90.550.10">
    <property type="entry name" value="Spore Coat Polysaccharide Biosynthesis Protein SpsA, Chain A"/>
    <property type="match status" value="1"/>
</dbReference>
<dbReference type="InterPro" id="IPR029044">
    <property type="entry name" value="Nucleotide-diphossugar_trans"/>
</dbReference>
<dbReference type="InterPro" id="IPR002618">
    <property type="entry name" value="UDPGP_fam"/>
</dbReference>
<dbReference type="InterPro" id="IPR016267">
    <property type="entry name" value="UDPGP_trans"/>
</dbReference>
<dbReference type="PANTHER" id="PTHR43511">
    <property type="match status" value="1"/>
</dbReference>
<dbReference type="Pfam" id="PF01704">
    <property type="entry name" value="UDPGP"/>
    <property type="match status" value="1"/>
</dbReference>
<dbReference type="PIRSF" id="PIRSF000806">
    <property type="entry name" value="UDPGP"/>
    <property type="match status" value="1"/>
</dbReference>
<dbReference type="SUPFAM" id="SSF53448">
    <property type="entry name" value="Nucleotide-diphospho-sugar transferases"/>
    <property type="match status" value="1"/>
</dbReference>
<organism>
    <name type="scientific">Sus scrofa</name>
    <name type="common">Pig</name>
    <dbReference type="NCBI Taxonomy" id="9823"/>
    <lineage>
        <taxon>Eukaryota</taxon>
        <taxon>Metazoa</taxon>
        <taxon>Chordata</taxon>
        <taxon>Craniata</taxon>
        <taxon>Vertebrata</taxon>
        <taxon>Euteleostomi</taxon>
        <taxon>Mammalia</taxon>
        <taxon>Eutheria</taxon>
        <taxon>Laurasiatheria</taxon>
        <taxon>Artiodactyla</taxon>
        <taxon>Suina</taxon>
        <taxon>Suidae</taxon>
        <taxon>Sus</taxon>
    </lineage>
</organism>
<comment type="function">
    <text evidence="2">UTP--glucose-1-phosphate uridylyltransferase catalyzing the conversion of glucose-1-phosphate into UDP-glucose, a crucial precursor for the production of glycogen.</text>
</comment>
<comment type="catalytic activity">
    <reaction evidence="2">
        <text>alpha-D-glucose 1-phosphate + UTP + H(+) = UDP-alpha-D-glucose + diphosphate</text>
        <dbReference type="Rhea" id="RHEA:19889"/>
        <dbReference type="ChEBI" id="CHEBI:15378"/>
        <dbReference type="ChEBI" id="CHEBI:33019"/>
        <dbReference type="ChEBI" id="CHEBI:46398"/>
        <dbReference type="ChEBI" id="CHEBI:58601"/>
        <dbReference type="ChEBI" id="CHEBI:58885"/>
        <dbReference type="EC" id="2.7.7.9"/>
    </reaction>
    <physiologicalReaction direction="left-to-right" evidence="2">
        <dbReference type="Rhea" id="RHEA:19890"/>
    </physiologicalReaction>
</comment>
<comment type="pathway">
    <text evidence="2">Glycan biosynthesis; glycogen biosynthesis.</text>
</comment>
<comment type="subunit">
    <text evidence="2">Homooctamer.</text>
</comment>
<comment type="subcellular location">
    <subcellularLocation>
        <location evidence="2">Cytoplasm</location>
    </subcellularLocation>
</comment>
<comment type="similarity">
    <text evidence="4">Belongs to the UDPGP type 1 family.</text>
</comment>
<sequence>MSRFVQDLSKAMSQDGASQFQEVIRQELELSVKKELEKILTTAPSHEFEHTKKDLDGFRKLFHRFLQEKGPSVDWGKIQRPPEDSIQPYEKIKARGLPDNISSVLNKLVVVKLNGGLGTSMGCKGPKSLIGVRNENTFLDLTVQQIEHLNKTYNTDVPLVLMNSFNTDEDTKKILQKYNHCRVKIYTFNQSRYPRINKESLLPVAKDVSYSGENTEAWYPPGHGDIYASFYNSGLLDTFIGEGKEYIFVSNIDNLGATVDLYILNHLMNPPNGRPCEFVMEATNKARADVKGGTLTQYEGKLRLVEIAQVPKPHVDEFKSVSKFKIFNTNNLWISLAAVKRLQEQNAIDMEIIVNPKTLDGGLNVIQLETAVGAAIKSFENSLGINVPRSRFLPVKTTSDLLLVMSNLYSLNAGSLTMSEKREFPTVPLVKLGSSFTKVQDYLRRFESIPDMLELDHLTVSGDVTFGKNVSLKGTVIIIXNHGDRIDIPPGAVLENKIVSGNLRILDH</sequence>
<protein>
    <recommendedName>
        <fullName>UTP--glucose-1-phosphate uridylyltransferase</fullName>
        <ecNumber evidence="2">2.7.7.9</ecNumber>
    </recommendedName>
    <alternativeName>
        <fullName>UDP-glucose pyrophosphorylase</fullName>
        <shortName>UDPGP</shortName>
        <shortName>UGPase</shortName>
    </alternativeName>
</protein>
<evidence type="ECO:0000250" key="1"/>
<evidence type="ECO:0000250" key="2">
    <source>
        <dbReference type="UniProtKB" id="Q16851"/>
    </source>
</evidence>
<evidence type="ECO:0000250" key="3">
    <source>
        <dbReference type="UniProtKB" id="Q9M9P3"/>
    </source>
</evidence>
<evidence type="ECO:0000305" key="4"/>
<proteinExistence type="evidence at transcript level"/>
<keyword id="KW-0007">Acetylation</keyword>
<keyword id="KW-0963">Cytoplasm</keyword>
<keyword id="KW-0460">Magnesium</keyword>
<keyword id="KW-0479">Metal-binding</keyword>
<keyword id="KW-0548">Nucleotidyltransferase</keyword>
<keyword id="KW-0597">Phosphoprotein</keyword>
<keyword id="KW-1185">Reference proteome</keyword>
<keyword id="KW-0808">Transferase</keyword>